<protein>
    <recommendedName>
        <fullName evidence="1">C4-dicarboxylate transport protein</fullName>
    </recommendedName>
</protein>
<gene>
    <name evidence="1" type="primary">dctA</name>
    <name type="ordered locus">mma_1996</name>
</gene>
<comment type="function">
    <text evidence="1">Responsible for the transport of dicarboxylates such as succinate, fumarate, and malate from the periplasm across the membrane.</text>
</comment>
<comment type="subcellular location">
    <subcellularLocation>
        <location evidence="1">Cell inner membrane</location>
        <topology evidence="1">Multi-pass membrane protein</topology>
    </subcellularLocation>
</comment>
<comment type="similarity">
    <text evidence="1">Belongs to the dicarboxylate/amino acid:cation symporter (DAACS) (TC 2.A.23) family.</text>
</comment>
<proteinExistence type="inferred from homology"/>
<name>DCTA_JANMA</name>
<sequence>MKKPPLYKSLYAQVIVAIIIGVLLGHFLPETGTAMKPLGDGFIKLIKMIIAPVIFCTVVIGIAGMEDMKKVGKTGGLALLYFEVMSTVALLVGLIIVNVLQPGAGMNVDVSTLDTASLASYTAPGKLETVTEFAMHIIPMSMIDAFAKGDVLQVLLVSVLFGFALQKLGGRGTLVFDFIEKISHVLFTIVGFIMRAAPVGAFGAMAFTIGKYGISSLLSLGKLMGAFYLTCLFFIFVVLGIVTRLHGFSIWKFVKYIKEELLIVLGTSSSESVLPRMIAKMENMGAKKSVVGLVIPTGYSFNLDGTAIYLTMAAVFIAQATNTPMSLMQQVTLLAVLLLTSKGAAGITGSGFIVLAATLSAVGHVPVAGLALILGIDRFMSEARALTNTIGNGVATLVVAKWVGDLDMDKLHAELDNESPQAADQPEKILDQTNTKLGA</sequence>
<evidence type="ECO:0000255" key="1">
    <source>
        <dbReference type="HAMAP-Rule" id="MF_01300"/>
    </source>
</evidence>
<evidence type="ECO:0000256" key="2">
    <source>
        <dbReference type="SAM" id="MobiDB-lite"/>
    </source>
</evidence>
<reference key="1">
    <citation type="journal article" date="2007" name="PLoS Genet.">
        <title>Genome analysis of Minibacterium massiliensis highlights the convergent evolution of water-living bacteria.</title>
        <authorList>
            <person name="Audic S."/>
            <person name="Robert C."/>
            <person name="Campagna B."/>
            <person name="Parinello H."/>
            <person name="Claverie J.-M."/>
            <person name="Raoult D."/>
            <person name="Drancourt M."/>
        </authorList>
    </citation>
    <scope>NUCLEOTIDE SEQUENCE [LARGE SCALE GENOMIC DNA]</scope>
    <source>
        <strain>Marseille</strain>
    </source>
</reference>
<dbReference type="EMBL" id="CP000269">
    <property type="protein sequence ID" value="ABR88990.1"/>
    <property type="molecule type" value="Genomic_DNA"/>
</dbReference>
<dbReference type="RefSeq" id="WP_012079849.1">
    <property type="nucleotide sequence ID" value="NC_009659.1"/>
</dbReference>
<dbReference type="SMR" id="A6SZI9"/>
<dbReference type="STRING" id="375286.mma_1996"/>
<dbReference type="KEGG" id="mms:mma_1996"/>
<dbReference type="eggNOG" id="COG1301">
    <property type="taxonomic scope" value="Bacteria"/>
</dbReference>
<dbReference type="HOGENOM" id="CLU_019375_7_0_4"/>
<dbReference type="OrthoDB" id="9766690at2"/>
<dbReference type="Proteomes" id="UP000006388">
    <property type="component" value="Chromosome"/>
</dbReference>
<dbReference type="GO" id="GO:0005886">
    <property type="term" value="C:plasma membrane"/>
    <property type="evidence" value="ECO:0007669"/>
    <property type="project" value="UniProtKB-SubCell"/>
</dbReference>
<dbReference type="GO" id="GO:0015138">
    <property type="term" value="F:fumarate transmembrane transporter activity"/>
    <property type="evidence" value="ECO:0007669"/>
    <property type="project" value="TreeGrafter"/>
</dbReference>
<dbReference type="GO" id="GO:0015366">
    <property type="term" value="F:malate:proton symporter activity"/>
    <property type="evidence" value="ECO:0007669"/>
    <property type="project" value="TreeGrafter"/>
</dbReference>
<dbReference type="GO" id="GO:0015141">
    <property type="term" value="F:succinate transmembrane transporter activity"/>
    <property type="evidence" value="ECO:0007669"/>
    <property type="project" value="TreeGrafter"/>
</dbReference>
<dbReference type="GO" id="GO:0070778">
    <property type="term" value="P:L-aspartate transmembrane transport"/>
    <property type="evidence" value="ECO:0007669"/>
    <property type="project" value="TreeGrafter"/>
</dbReference>
<dbReference type="FunFam" id="1.10.3860.10:FF:000001">
    <property type="entry name" value="C4-dicarboxylate transport protein"/>
    <property type="match status" value="1"/>
</dbReference>
<dbReference type="Gene3D" id="1.10.3860.10">
    <property type="entry name" value="Sodium:dicarboxylate symporter"/>
    <property type="match status" value="1"/>
</dbReference>
<dbReference type="HAMAP" id="MF_01300">
    <property type="entry name" value="C4_dicarb_transport"/>
    <property type="match status" value="1"/>
</dbReference>
<dbReference type="InterPro" id="IPR023954">
    <property type="entry name" value="C4_dicarb_transport"/>
</dbReference>
<dbReference type="InterPro" id="IPR001991">
    <property type="entry name" value="Na-dicarboxylate_symporter"/>
</dbReference>
<dbReference type="InterPro" id="IPR018107">
    <property type="entry name" value="Na-dicarboxylate_symporter_CS"/>
</dbReference>
<dbReference type="InterPro" id="IPR036458">
    <property type="entry name" value="Na:dicarbo_symporter_sf"/>
</dbReference>
<dbReference type="NCBIfam" id="NF002461">
    <property type="entry name" value="PRK01663.1"/>
    <property type="match status" value="1"/>
</dbReference>
<dbReference type="NCBIfam" id="NF009587">
    <property type="entry name" value="PRK13027.1"/>
    <property type="match status" value="1"/>
</dbReference>
<dbReference type="PANTHER" id="PTHR42865:SF1">
    <property type="entry name" value="AEROBIC C4-DICARBOXYLATE TRANSPORT PROTEIN"/>
    <property type="match status" value="1"/>
</dbReference>
<dbReference type="PANTHER" id="PTHR42865">
    <property type="entry name" value="PROTON/GLUTAMATE-ASPARTATE SYMPORTER"/>
    <property type="match status" value="1"/>
</dbReference>
<dbReference type="Pfam" id="PF00375">
    <property type="entry name" value="SDF"/>
    <property type="match status" value="1"/>
</dbReference>
<dbReference type="PRINTS" id="PR00173">
    <property type="entry name" value="EDTRNSPORT"/>
</dbReference>
<dbReference type="SUPFAM" id="SSF118215">
    <property type="entry name" value="Proton glutamate symport protein"/>
    <property type="match status" value="1"/>
</dbReference>
<dbReference type="PROSITE" id="PS00713">
    <property type="entry name" value="NA_DICARBOXYL_SYMP_1"/>
    <property type="match status" value="1"/>
</dbReference>
<dbReference type="PROSITE" id="PS00714">
    <property type="entry name" value="NA_DICARBOXYL_SYMP_2"/>
    <property type="match status" value="1"/>
</dbReference>
<feature type="chain" id="PRO_0000321986" description="C4-dicarboxylate transport protein">
    <location>
        <begin position="1"/>
        <end position="439"/>
    </location>
</feature>
<feature type="transmembrane region" description="Helical" evidence="1">
    <location>
        <begin position="9"/>
        <end position="29"/>
    </location>
</feature>
<feature type="transmembrane region" description="Helical" evidence="1">
    <location>
        <begin position="45"/>
        <end position="65"/>
    </location>
</feature>
<feature type="transmembrane region" description="Helical" evidence="1">
    <location>
        <begin position="77"/>
        <end position="97"/>
    </location>
</feature>
<feature type="transmembrane region" description="Helical" evidence="1">
    <location>
        <begin position="145"/>
        <end position="165"/>
    </location>
</feature>
<feature type="transmembrane region" description="Helical" evidence="1">
    <location>
        <begin position="185"/>
        <end position="205"/>
    </location>
</feature>
<feature type="transmembrane region" description="Helical" evidence="1">
    <location>
        <begin position="223"/>
        <end position="243"/>
    </location>
</feature>
<feature type="transmembrane region" description="Helical" evidence="1">
    <location>
        <begin position="290"/>
        <end position="310"/>
    </location>
</feature>
<feature type="transmembrane region" description="Helical" evidence="1">
    <location>
        <begin position="332"/>
        <end position="352"/>
    </location>
</feature>
<feature type="transmembrane region" description="Helical" evidence="1">
    <location>
        <begin position="353"/>
        <end position="373"/>
    </location>
</feature>
<feature type="region of interest" description="Disordered" evidence="2">
    <location>
        <begin position="417"/>
        <end position="439"/>
    </location>
</feature>
<organism>
    <name type="scientific">Janthinobacterium sp. (strain Marseille)</name>
    <name type="common">Minibacterium massiliensis</name>
    <dbReference type="NCBI Taxonomy" id="375286"/>
    <lineage>
        <taxon>Bacteria</taxon>
        <taxon>Pseudomonadati</taxon>
        <taxon>Pseudomonadota</taxon>
        <taxon>Betaproteobacteria</taxon>
        <taxon>Burkholderiales</taxon>
        <taxon>Oxalobacteraceae</taxon>
        <taxon>Janthinobacterium</taxon>
    </lineage>
</organism>
<accession>A6SZI9</accession>
<keyword id="KW-0997">Cell inner membrane</keyword>
<keyword id="KW-1003">Cell membrane</keyword>
<keyword id="KW-0472">Membrane</keyword>
<keyword id="KW-0769">Symport</keyword>
<keyword id="KW-0812">Transmembrane</keyword>
<keyword id="KW-1133">Transmembrane helix</keyword>
<keyword id="KW-0813">Transport</keyword>